<evidence type="ECO:0000255" key="1">
    <source>
        <dbReference type="HAMAP-Rule" id="MF_00110"/>
    </source>
</evidence>
<protein>
    <recommendedName>
        <fullName evidence="1">3-dehydroquinate synthase</fullName>
        <shortName evidence="1">DHQS</shortName>
        <ecNumber evidence="1">4.2.3.4</ecNumber>
    </recommendedName>
</protein>
<gene>
    <name evidence="1" type="primary">aroB</name>
    <name type="ordered locus">SEN3312</name>
</gene>
<feature type="chain" id="PRO_1000094597" description="3-dehydroquinate synthase">
    <location>
        <begin position="1"/>
        <end position="362"/>
    </location>
</feature>
<feature type="binding site" evidence="1">
    <location>
        <begin position="71"/>
        <end position="76"/>
    </location>
    <ligand>
        <name>NAD(+)</name>
        <dbReference type="ChEBI" id="CHEBI:57540"/>
    </ligand>
</feature>
<feature type="binding site" evidence="1">
    <location>
        <begin position="105"/>
        <end position="109"/>
    </location>
    <ligand>
        <name>NAD(+)</name>
        <dbReference type="ChEBI" id="CHEBI:57540"/>
    </ligand>
</feature>
<feature type="binding site" evidence="1">
    <location>
        <begin position="129"/>
        <end position="130"/>
    </location>
    <ligand>
        <name>NAD(+)</name>
        <dbReference type="ChEBI" id="CHEBI:57540"/>
    </ligand>
</feature>
<feature type="binding site" evidence="1">
    <location>
        <position position="142"/>
    </location>
    <ligand>
        <name>NAD(+)</name>
        <dbReference type="ChEBI" id="CHEBI:57540"/>
    </ligand>
</feature>
<feature type="binding site" evidence="1">
    <location>
        <position position="151"/>
    </location>
    <ligand>
        <name>NAD(+)</name>
        <dbReference type="ChEBI" id="CHEBI:57540"/>
    </ligand>
</feature>
<feature type="binding site" evidence="1">
    <location>
        <begin position="169"/>
        <end position="172"/>
    </location>
    <ligand>
        <name>NAD(+)</name>
        <dbReference type="ChEBI" id="CHEBI:57540"/>
    </ligand>
</feature>
<feature type="binding site" evidence="1">
    <location>
        <position position="184"/>
    </location>
    <ligand>
        <name>Zn(2+)</name>
        <dbReference type="ChEBI" id="CHEBI:29105"/>
    </ligand>
</feature>
<feature type="binding site" evidence="1">
    <location>
        <position position="247"/>
    </location>
    <ligand>
        <name>Zn(2+)</name>
        <dbReference type="ChEBI" id="CHEBI:29105"/>
    </ligand>
</feature>
<feature type="binding site" evidence="1">
    <location>
        <position position="264"/>
    </location>
    <ligand>
        <name>Zn(2+)</name>
        <dbReference type="ChEBI" id="CHEBI:29105"/>
    </ligand>
</feature>
<accession>B5R2D5</accession>
<organism>
    <name type="scientific">Salmonella enteritidis PT4 (strain P125109)</name>
    <dbReference type="NCBI Taxonomy" id="550537"/>
    <lineage>
        <taxon>Bacteria</taxon>
        <taxon>Pseudomonadati</taxon>
        <taxon>Pseudomonadota</taxon>
        <taxon>Gammaproteobacteria</taxon>
        <taxon>Enterobacterales</taxon>
        <taxon>Enterobacteriaceae</taxon>
        <taxon>Salmonella</taxon>
    </lineage>
</organism>
<name>AROB_SALEP</name>
<reference key="1">
    <citation type="journal article" date="2008" name="Genome Res.">
        <title>Comparative genome analysis of Salmonella enteritidis PT4 and Salmonella gallinarum 287/91 provides insights into evolutionary and host adaptation pathways.</title>
        <authorList>
            <person name="Thomson N.R."/>
            <person name="Clayton D.J."/>
            <person name="Windhorst D."/>
            <person name="Vernikos G."/>
            <person name="Davidson S."/>
            <person name="Churcher C."/>
            <person name="Quail M.A."/>
            <person name="Stevens M."/>
            <person name="Jones M.A."/>
            <person name="Watson M."/>
            <person name="Barron A."/>
            <person name="Layton A."/>
            <person name="Pickard D."/>
            <person name="Kingsley R.A."/>
            <person name="Bignell A."/>
            <person name="Clark L."/>
            <person name="Harris B."/>
            <person name="Ormond D."/>
            <person name="Abdellah Z."/>
            <person name="Brooks K."/>
            <person name="Cherevach I."/>
            <person name="Chillingworth T."/>
            <person name="Woodward J."/>
            <person name="Norberczak H."/>
            <person name="Lord A."/>
            <person name="Arrowsmith C."/>
            <person name="Jagels K."/>
            <person name="Moule S."/>
            <person name="Mungall K."/>
            <person name="Saunders M."/>
            <person name="Whitehead S."/>
            <person name="Chabalgoity J.A."/>
            <person name="Maskell D."/>
            <person name="Humphreys T."/>
            <person name="Roberts M."/>
            <person name="Barrow P.A."/>
            <person name="Dougan G."/>
            <person name="Parkhill J."/>
        </authorList>
    </citation>
    <scope>NUCLEOTIDE SEQUENCE [LARGE SCALE GENOMIC DNA]</scope>
    <source>
        <strain>P125109</strain>
    </source>
</reference>
<dbReference type="EC" id="4.2.3.4" evidence="1"/>
<dbReference type="EMBL" id="AM933172">
    <property type="protein sequence ID" value="CAR34887.1"/>
    <property type="molecule type" value="Genomic_DNA"/>
</dbReference>
<dbReference type="RefSeq" id="WP_000439826.1">
    <property type="nucleotide sequence ID" value="NC_011294.1"/>
</dbReference>
<dbReference type="SMR" id="B5R2D5"/>
<dbReference type="KEGG" id="set:SEN3312"/>
<dbReference type="HOGENOM" id="CLU_001201_0_2_6"/>
<dbReference type="UniPathway" id="UPA00053">
    <property type="reaction ID" value="UER00085"/>
</dbReference>
<dbReference type="Proteomes" id="UP000000613">
    <property type="component" value="Chromosome"/>
</dbReference>
<dbReference type="GO" id="GO:0005737">
    <property type="term" value="C:cytoplasm"/>
    <property type="evidence" value="ECO:0007669"/>
    <property type="project" value="UniProtKB-SubCell"/>
</dbReference>
<dbReference type="GO" id="GO:0003856">
    <property type="term" value="F:3-dehydroquinate synthase activity"/>
    <property type="evidence" value="ECO:0007669"/>
    <property type="project" value="UniProtKB-UniRule"/>
</dbReference>
<dbReference type="GO" id="GO:0046872">
    <property type="term" value="F:metal ion binding"/>
    <property type="evidence" value="ECO:0007669"/>
    <property type="project" value="UniProtKB-KW"/>
</dbReference>
<dbReference type="GO" id="GO:0000166">
    <property type="term" value="F:nucleotide binding"/>
    <property type="evidence" value="ECO:0007669"/>
    <property type="project" value="UniProtKB-KW"/>
</dbReference>
<dbReference type="GO" id="GO:0008652">
    <property type="term" value="P:amino acid biosynthetic process"/>
    <property type="evidence" value="ECO:0007669"/>
    <property type="project" value="UniProtKB-KW"/>
</dbReference>
<dbReference type="GO" id="GO:0009073">
    <property type="term" value="P:aromatic amino acid family biosynthetic process"/>
    <property type="evidence" value="ECO:0007669"/>
    <property type="project" value="UniProtKB-KW"/>
</dbReference>
<dbReference type="GO" id="GO:0009423">
    <property type="term" value="P:chorismate biosynthetic process"/>
    <property type="evidence" value="ECO:0007669"/>
    <property type="project" value="UniProtKB-UniRule"/>
</dbReference>
<dbReference type="CDD" id="cd08195">
    <property type="entry name" value="DHQS"/>
    <property type="match status" value="1"/>
</dbReference>
<dbReference type="FunFam" id="1.20.1090.10:FF:000002">
    <property type="entry name" value="3-dehydroquinate synthase"/>
    <property type="match status" value="1"/>
</dbReference>
<dbReference type="FunFam" id="3.40.50.1970:FF:000001">
    <property type="entry name" value="3-dehydroquinate synthase"/>
    <property type="match status" value="1"/>
</dbReference>
<dbReference type="Gene3D" id="3.40.50.1970">
    <property type="match status" value="1"/>
</dbReference>
<dbReference type="Gene3D" id="1.20.1090.10">
    <property type="entry name" value="Dehydroquinate synthase-like - alpha domain"/>
    <property type="match status" value="1"/>
</dbReference>
<dbReference type="HAMAP" id="MF_00110">
    <property type="entry name" value="DHQ_synthase"/>
    <property type="match status" value="1"/>
</dbReference>
<dbReference type="InterPro" id="IPR050071">
    <property type="entry name" value="Dehydroquinate_synthase"/>
</dbReference>
<dbReference type="InterPro" id="IPR016037">
    <property type="entry name" value="DHQ_synth_AroB"/>
</dbReference>
<dbReference type="InterPro" id="IPR030963">
    <property type="entry name" value="DHQ_synth_fam"/>
</dbReference>
<dbReference type="InterPro" id="IPR030960">
    <property type="entry name" value="DHQS/DOIS_N"/>
</dbReference>
<dbReference type="InterPro" id="IPR056179">
    <property type="entry name" value="DHQS_C"/>
</dbReference>
<dbReference type="NCBIfam" id="TIGR01357">
    <property type="entry name" value="aroB"/>
    <property type="match status" value="1"/>
</dbReference>
<dbReference type="PANTHER" id="PTHR43622">
    <property type="entry name" value="3-DEHYDROQUINATE SYNTHASE"/>
    <property type="match status" value="1"/>
</dbReference>
<dbReference type="PANTHER" id="PTHR43622:SF7">
    <property type="entry name" value="3-DEHYDROQUINATE SYNTHASE, CHLOROPLASTIC"/>
    <property type="match status" value="1"/>
</dbReference>
<dbReference type="Pfam" id="PF01761">
    <property type="entry name" value="DHQ_synthase"/>
    <property type="match status" value="1"/>
</dbReference>
<dbReference type="Pfam" id="PF24621">
    <property type="entry name" value="DHQS_C"/>
    <property type="match status" value="1"/>
</dbReference>
<dbReference type="PIRSF" id="PIRSF001455">
    <property type="entry name" value="DHQ_synth"/>
    <property type="match status" value="1"/>
</dbReference>
<dbReference type="SUPFAM" id="SSF56796">
    <property type="entry name" value="Dehydroquinate synthase-like"/>
    <property type="match status" value="1"/>
</dbReference>
<comment type="function">
    <text evidence="1">Catalyzes the conversion of 3-deoxy-D-arabino-heptulosonate 7-phosphate (DAHP) to dehydroquinate (DHQ).</text>
</comment>
<comment type="catalytic activity">
    <reaction evidence="1">
        <text>7-phospho-2-dehydro-3-deoxy-D-arabino-heptonate = 3-dehydroquinate + phosphate</text>
        <dbReference type="Rhea" id="RHEA:21968"/>
        <dbReference type="ChEBI" id="CHEBI:32364"/>
        <dbReference type="ChEBI" id="CHEBI:43474"/>
        <dbReference type="ChEBI" id="CHEBI:58394"/>
        <dbReference type="EC" id="4.2.3.4"/>
    </reaction>
</comment>
<comment type="cofactor">
    <cofactor evidence="1">
        <name>Co(2+)</name>
        <dbReference type="ChEBI" id="CHEBI:48828"/>
    </cofactor>
    <cofactor evidence="1">
        <name>Zn(2+)</name>
        <dbReference type="ChEBI" id="CHEBI:29105"/>
    </cofactor>
    <text evidence="1">Binds 1 divalent metal cation per subunit. Can use either Co(2+) or Zn(2+).</text>
</comment>
<comment type="cofactor">
    <cofactor evidence="1">
        <name>NAD(+)</name>
        <dbReference type="ChEBI" id="CHEBI:57540"/>
    </cofactor>
</comment>
<comment type="pathway">
    <text evidence="1">Metabolic intermediate biosynthesis; chorismate biosynthesis; chorismate from D-erythrose 4-phosphate and phosphoenolpyruvate: step 2/7.</text>
</comment>
<comment type="subcellular location">
    <subcellularLocation>
        <location evidence="1">Cytoplasm</location>
    </subcellularLocation>
</comment>
<comment type="similarity">
    <text evidence="1">Belongs to the sugar phosphate cyclases superfamily. Dehydroquinate synthase family.</text>
</comment>
<keyword id="KW-0028">Amino-acid biosynthesis</keyword>
<keyword id="KW-0057">Aromatic amino acid biosynthesis</keyword>
<keyword id="KW-0170">Cobalt</keyword>
<keyword id="KW-0963">Cytoplasm</keyword>
<keyword id="KW-0456">Lyase</keyword>
<keyword id="KW-0479">Metal-binding</keyword>
<keyword id="KW-0520">NAD</keyword>
<keyword id="KW-0547">Nucleotide-binding</keyword>
<keyword id="KW-0862">Zinc</keyword>
<proteinExistence type="inferred from homology"/>
<sequence length="362" mass="38710">MERITVTLGERSYPITIAAGLFNEPASFLPLKSGDQVMLVTNETLAPLYLDKVRGVLERAGVNVDSVILPDGEQYKSLTVLDTVFTALLKKPHGRDTTLVALGGGVIGDLTGFAAASYQRGVRFIQVPTTLLSQVDSSVGGKTAVNHPLGKNMIGAFYQPASVVVDLDCLKTLPARELASGLAEVIKYGIILDADFFTWLEGNLDALLRLDGPAMAYCIRRCCELKAEVVAADEREAGLRALLNLGHTFGHAIEAEMGYGNWLHGEAVAAGIVMAARASERLGQFSSTDTQRIIALLERAGLPVNGPCEMSAQDYLPHMLRDKKVLAGELRLVLPLAIGKSEVRGGVSHEVVLSAIADCQQA</sequence>